<protein>
    <recommendedName>
        <fullName>Nuclear transition protein 2</fullName>
        <shortName>TP-2</shortName>
        <shortName>TP2</shortName>
    </recommendedName>
</protein>
<dbReference type="EMBL" id="AF071208">
    <property type="protein sequence ID" value="AAC23891.1"/>
    <property type="molecule type" value="Genomic_DNA"/>
</dbReference>
<dbReference type="RefSeq" id="NP_001013436.1">
    <property type="nucleotide sequence ID" value="NM_001013418.1"/>
</dbReference>
<dbReference type="SMR" id="O77645"/>
<dbReference type="STRING" id="9615.ENSCAFP00000047443"/>
<dbReference type="PaxDb" id="9615-ENSCAFP00000047443"/>
<dbReference type="GeneID" id="479849"/>
<dbReference type="KEGG" id="cfa:479849"/>
<dbReference type="CTD" id="7142"/>
<dbReference type="InParanoid" id="O77645"/>
<dbReference type="OrthoDB" id="9809326at2759"/>
<dbReference type="Proteomes" id="UP000002254">
    <property type="component" value="Chromosome 6"/>
</dbReference>
<dbReference type="Proteomes" id="UP000694429">
    <property type="component" value="Unplaced"/>
</dbReference>
<dbReference type="Proteomes" id="UP000694542">
    <property type="component" value="Unplaced"/>
</dbReference>
<dbReference type="Proteomes" id="UP000805418">
    <property type="component" value="Unplaced"/>
</dbReference>
<dbReference type="Bgee" id="ENSCAFG00000031312">
    <property type="expression patterns" value="Expressed in testis and 19 other cell types or tissues"/>
</dbReference>
<dbReference type="GO" id="GO:0005730">
    <property type="term" value="C:nucleolus"/>
    <property type="evidence" value="ECO:0007669"/>
    <property type="project" value="UniProtKB-SubCell"/>
</dbReference>
<dbReference type="GO" id="GO:0000786">
    <property type="term" value="C:nucleosome"/>
    <property type="evidence" value="ECO:0000250"/>
    <property type="project" value="UniProtKB"/>
</dbReference>
<dbReference type="GO" id="GO:0003677">
    <property type="term" value="F:DNA binding"/>
    <property type="evidence" value="ECO:0007669"/>
    <property type="project" value="UniProtKB-KW"/>
</dbReference>
<dbReference type="GO" id="GO:0008270">
    <property type="term" value="F:zinc ion binding"/>
    <property type="evidence" value="ECO:0000318"/>
    <property type="project" value="GO_Central"/>
</dbReference>
<dbReference type="GO" id="GO:0007340">
    <property type="term" value="P:acrosome reaction"/>
    <property type="evidence" value="ECO:0000318"/>
    <property type="project" value="GO_Central"/>
</dbReference>
<dbReference type="GO" id="GO:0007341">
    <property type="term" value="P:penetration of zona pellucida"/>
    <property type="evidence" value="ECO:0000318"/>
    <property type="project" value="GO_Central"/>
</dbReference>
<dbReference type="GO" id="GO:0010954">
    <property type="term" value="P:positive regulation of protein processing"/>
    <property type="evidence" value="ECO:0000250"/>
    <property type="project" value="UniProtKB"/>
</dbReference>
<dbReference type="GO" id="GO:0035092">
    <property type="term" value="P:sperm DNA condensation"/>
    <property type="evidence" value="ECO:0000250"/>
    <property type="project" value="UniProtKB"/>
</dbReference>
<dbReference type="GO" id="GO:0007283">
    <property type="term" value="P:spermatogenesis"/>
    <property type="evidence" value="ECO:0000318"/>
    <property type="project" value="GO_Central"/>
</dbReference>
<dbReference type="InterPro" id="IPR000678">
    <property type="entry name" value="TP2"/>
</dbReference>
<dbReference type="PANTHER" id="PTHR17488">
    <property type="entry name" value="NUCLEAR TRANSITION PROTEIN 2"/>
    <property type="match status" value="1"/>
</dbReference>
<dbReference type="PANTHER" id="PTHR17488:SF0">
    <property type="entry name" value="NUCLEAR TRANSITION PROTEIN 2"/>
    <property type="match status" value="1"/>
</dbReference>
<dbReference type="Pfam" id="PF01254">
    <property type="entry name" value="TP2"/>
    <property type="match status" value="1"/>
</dbReference>
<dbReference type="PROSITE" id="PS00970">
    <property type="entry name" value="TP2_1"/>
    <property type="match status" value="1"/>
</dbReference>
<dbReference type="PROSITE" id="PS00971">
    <property type="entry name" value="TP2_2"/>
    <property type="match status" value="1"/>
</dbReference>
<keyword id="KW-0158">Chromosome</keyword>
<keyword id="KW-0217">Developmental protein</keyword>
<keyword id="KW-0221">Differentiation</keyword>
<keyword id="KW-0238">DNA-binding</keyword>
<keyword id="KW-0479">Metal-binding</keyword>
<keyword id="KW-0544">Nucleosome core</keyword>
<keyword id="KW-0539">Nucleus</keyword>
<keyword id="KW-0597">Phosphoprotein</keyword>
<keyword id="KW-1185">Reference proteome</keyword>
<keyword id="KW-0744">Spermatogenesis</keyword>
<keyword id="KW-0862">Zinc</keyword>
<accession>O77645</accession>
<reference key="1">
    <citation type="submission" date="1998-06" db="EMBL/GenBank/DDBJ databases">
        <title>Polymorphisms in the canine transition protein 2 gene.</title>
        <authorList>
            <person name="Shibuya H."/>
            <person name="Nonneman D."/>
            <person name="Liu P.-C."/>
            <person name="Johnson G.S."/>
        </authorList>
    </citation>
    <scope>NUCLEOTIDE SEQUENCE [GENOMIC DNA]</scope>
</reference>
<proteinExistence type="evidence at transcript level"/>
<name>STP2_CANLF</name>
<sequence length="129" mass="14567">MDTKTQSLPITHTQPHSNSRPQGHTCSQCTCSSHCQTCSQSCSQSRSSSQSPTGHHSSSGHQSQSPHPTLPPRHQKHTRHSHHCPPRPTTHSCSYPKNRKNFEGKVNKRKVVKRSQQVYKTKRRNSGRK</sequence>
<organism>
    <name type="scientific">Canis lupus familiaris</name>
    <name type="common">Dog</name>
    <name type="synonym">Canis familiaris</name>
    <dbReference type="NCBI Taxonomy" id="9615"/>
    <lineage>
        <taxon>Eukaryota</taxon>
        <taxon>Metazoa</taxon>
        <taxon>Chordata</taxon>
        <taxon>Craniata</taxon>
        <taxon>Vertebrata</taxon>
        <taxon>Euteleostomi</taxon>
        <taxon>Mammalia</taxon>
        <taxon>Eutheria</taxon>
        <taxon>Laurasiatheria</taxon>
        <taxon>Carnivora</taxon>
        <taxon>Caniformia</taxon>
        <taxon>Canidae</taxon>
        <taxon>Canis</taxon>
    </lineage>
</organism>
<gene>
    <name type="primary">TNP2</name>
</gene>
<comment type="function">
    <text evidence="2">Plays a key role in the replacement of histones to protamine in the elongating spermatids of mammals. In condensing spermatids, loaded onto the nucleosomes, where it promotes the recruitment and processing of protamines, which are responsible for histone eviction.</text>
</comment>
<comment type="subcellular location">
    <subcellularLocation>
        <location evidence="1">Nucleus</location>
    </subcellularLocation>
    <subcellularLocation>
        <location evidence="1">Nucleus</location>
        <location evidence="1">Nucleolus</location>
    </subcellularLocation>
    <subcellularLocation>
        <location evidence="1">Chromosome</location>
    </subcellularLocation>
    <text evidence="1 2">Loaded onto the nucleosomes of condensing spermatids (By similarity). Nuclear import is mediated by IPO4. Nucleolar localization requires the protein to be phosphorylated (By similarity).</text>
</comment>
<comment type="tissue specificity">
    <text>Testis.</text>
</comment>
<comment type="similarity">
    <text evidence="4">Belongs to the nuclear transition protein 2 family.</text>
</comment>
<feature type="chain" id="PRO_0000191423" description="Nuclear transition protein 2">
    <location>
        <begin position="1"/>
        <end position="129"/>
    </location>
</feature>
<feature type="region of interest" description="Disordered" evidence="3">
    <location>
        <begin position="1"/>
        <end position="129"/>
    </location>
</feature>
<feature type="short sequence motif" description="Nuclear localization signal" evidence="1">
    <location>
        <begin position="104"/>
        <end position="112"/>
    </location>
</feature>
<feature type="compositionally biased region" description="Polar residues" evidence="3">
    <location>
        <begin position="1"/>
        <end position="21"/>
    </location>
</feature>
<feature type="compositionally biased region" description="Low complexity" evidence="3">
    <location>
        <begin position="22"/>
        <end position="67"/>
    </location>
</feature>
<feature type="compositionally biased region" description="Basic residues" evidence="3">
    <location>
        <begin position="73"/>
        <end position="85"/>
    </location>
</feature>
<feature type="compositionally biased region" description="Basic residues" evidence="3">
    <location>
        <begin position="120"/>
        <end position="129"/>
    </location>
</feature>
<feature type="binding site" evidence="1">
    <location>
        <position position="12"/>
    </location>
    <ligand>
        <name>Zn(2+)</name>
        <dbReference type="ChEBI" id="CHEBI:29105"/>
    </ligand>
</feature>
<feature type="binding site" evidence="1">
    <location>
        <position position="16"/>
    </location>
    <ligand>
        <name>Zn(2+)</name>
        <dbReference type="ChEBI" id="CHEBI:29105"/>
    </ligand>
</feature>
<feature type="binding site" evidence="1">
    <location>
        <position position="24"/>
    </location>
    <ligand>
        <name>Zn(2+)</name>
        <dbReference type="ChEBI" id="CHEBI:29105"/>
    </ligand>
</feature>
<feature type="binding site" evidence="1">
    <location>
        <position position="29"/>
    </location>
    <ligand>
        <name>Zn(2+)</name>
        <dbReference type="ChEBI" id="CHEBI:29105"/>
    </ligand>
</feature>
<feature type="binding site" evidence="1">
    <location>
        <position position="31"/>
    </location>
    <ligand>
        <name>Zn(2+)</name>
        <dbReference type="ChEBI" id="CHEBI:29105"/>
    </ligand>
</feature>
<feature type="binding site" evidence="1">
    <location>
        <position position="35"/>
    </location>
    <ligand>
        <name>Zn(2+)</name>
        <dbReference type="ChEBI" id="CHEBI:29105"/>
    </ligand>
</feature>
<feature type="binding site" evidence="1">
    <location>
        <position position="38"/>
    </location>
    <ligand>
        <name>Zn(2+)</name>
        <dbReference type="ChEBI" id="CHEBI:29105"/>
    </ligand>
</feature>
<feature type="modified residue" description="Phosphoserine" evidence="1">
    <location>
        <position position="126"/>
    </location>
</feature>
<evidence type="ECO:0000250" key="1">
    <source>
        <dbReference type="UniProtKB" id="P11101"/>
    </source>
</evidence>
<evidence type="ECO:0000250" key="2">
    <source>
        <dbReference type="UniProtKB" id="P11378"/>
    </source>
</evidence>
<evidence type="ECO:0000256" key="3">
    <source>
        <dbReference type="SAM" id="MobiDB-lite"/>
    </source>
</evidence>
<evidence type="ECO:0000305" key="4"/>